<proteinExistence type="inferred from homology"/>
<sequence>MHFHFSKMHGLGNDFMVVDCITQNVFFSPELIRRLADRHTGVGFDQLLVVEAPYDPESDFHYRIFNADGSEVEQCGNGARCFARFVRMKGLTNKYTIHVSTKKGKMVLNVEEEDLITVNMGVPEFEPNKIPFRAKQSEKTYILRVGEHTLFCGAVSMGNPHVVTVVDDIRTAAVETLGPLLESHERFPERVNAGFMQVVSRDEINLRVYERGAGETQACGSGACAAVAVGILQGLLDEQVRVHLPGGELEIHWQGPGKPLYMTGPATHIYDGQISC</sequence>
<gene>
    <name evidence="1" type="primary">dapF</name>
    <name type="ordered locus">VC0395_A2393</name>
    <name type="ordered locus">VC395_0054</name>
</gene>
<comment type="function">
    <text evidence="1">Catalyzes the stereoinversion of LL-2,6-diaminopimelate (L,L-DAP) to meso-diaminopimelate (meso-DAP), a precursor of L-lysine and an essential component of the bacterial peptidoglycan.</text>
</comment>
<comment type="catalytic activity">
    <reaction evidence="1">
        <text>(2S,6S)-2,6-diaminopimelate = meso-2,6-diaminopimelate</text>
        <dbReference type="Rhea" id="RHEA:15393"/>
        <dbReference type="ChEBI" id="CHEBI:57609"/>
        <dbReference type="ChEBI" id="CHEBI:57791"/>
        <dbReference type="EC" id="5.1.1.7"/>
    </reaction>
</comment>
<comment type="pathway">
    <text evidence="1">Amino-acid biosynthesis; L-lysine biosynthesis via DAP pathway; DL-2,6-diaminopimelate from LL-2,6-diaminopimelate: step 1/1.</text>
</comment>
<comment type="subunit">
    <text evidence="1">Homodimer.</text>
</comment>
<comment type="subcellular location">
    <subcellularLocation>
        <location evidence="1">Cytoplasm</location>
    </subcellularLocation>
</comment>
<comment type="similarity">
    <text evidence="1">Belongs to the diaminopimelate epimerase family.</text>
</comment>
<comment type="sequence caution" evidence="2">
    <conflict type="erroneous initiation">
        <sequence resource="EMBL-CDS" id="ACP08082"/>
    </conflict>
    <text>Extended N-terminus.</text>
</comment>
<evidence type="ECO:0000255" key="1">
    <source>
        <dbReference type="HAMAP-Rule" id="MF_00197"/>
    </source>
</evidence>
<evidence type="ECO:0000305" key="2"/>
<protein>
    <recommendedName>
        <fullName evidence="1">Diaminopimelate epimerase</fullName>
        <shortName evidence="1">DAP epimerase</shortName>
        <ecNumber evidence="1">5.1.1.7</ecNumber>
    </recommendedName>
    <alternativeName>
        <fullName evidence="1">PLP-independent amino acid racemase</fullName>
    </alternativeName>
</protein>
<organism>
    <name type="scientific">Vibrio cholerae serotype O1 (strain ATCC 39541 / Classical Ogawa 395 / O395)</name>
    <dbReference type="NCBI Taxonomy" id="345073"/>
    <lineage>
        <taxon>Bacteria</taxon>
        <taxon>Pseudomonadati</taxon>
        <taxon>Pseudomonadota</taxon>
        <taxon>Gammaproteobacteria</taxon>
        <taxon>Vibrionales</taxon>
        <taxon>Vibrionaceae</taxon>
        <taxon>Vibrio</taxon>
    </lineage>
</organism>
<accession>A5F4I6</accession>
<accession>C3M2B8</accession>
<keyword id="KW-0028">Amino-acid biosynthesis</keyword>
<keyword id="KW-0963">Cytoplasm</keyword>
<keyword id="KW-0413">Isomerase</keyword>
<keyword id="KW-0457">Lysine biosynthesis</keyword>
<name>DAPF_VIBC3</name>
<reference key="1">
    <citation type="submission" date="2007-03" db="EMBL/GenBank/DDBJ databases">
        <authorList>
            <person name="Heidelberg J."/>
        </authorList>
    </citation>
    <scope>NUCLEOTIDE SEQUENCE [LARGE SCALE GENOMIC DNA]</scope>
    <source>
        <strain>ATCC 39541 / Classical Ogawa 395 / O395</strain>
    </source>
</reference>
<reference key="2">
    <citation type="journal article" date="2008" name="PLoS ONE">
        <title>A recalibrated molecular clock and independent origins for the cholera pandemic clones.</title>
        <authorList>
            <person name="Feng L."/>
            <person name="Reeves P.R."/>
            <person name="Lan R."/>
            <person name="Ren Y."/>
            <person name="Gao C."/>
            <person name="Zhou Z."/>
            <person name="Ren Y."/>
            <person name="Cheng J."/>
            <person name="Wang W."/>
            <person name="Wang J."/>
            <person name="Qian W."/>
            <person name="Li D."/>
            <person name="Wang L."/>
        </authorList>
    </citation>
    <scope>NUCLEOTIDE SEQUENCE [LARGE SCALE GENOMIC DNA]</scope>
    <source>
        <strain>ATCC 39541 / Classical Ogawa 395 / O395</strain>
    </source>
</reference>
<feature type="chain" id="PRO_1000071717" description="Diaminopimelate epimerase">
    <location>
        <begin position="1"/>
        <end position="276"/>
    </location>
</feature>
<feature type="active site" description="Proton donor" evidence="1">
    <location>
        <position position="75"/>
    </location>
</feature>
<feature type="active site" description="Proton acceptor" evidence="1">
    <location>
        <position position="219"/>
    </location>
</feature>
<feature type="binding site" evidence="1">
    <location>
        <position position="13"/>
    </location>
    <ligand>
        <name>substrate</name>
    </ligand>
</feature>
<feature type="binding site" evidence="1">
    <location>
        <position position="46"/>
    </location>
    <ligand>
        <name>substrate</name>
    </ligand>
</feature>
<feature type="binding site" evidence="1">
    <location>
        <position position="66"/>
    </location>
    <ligand>
        <name>substrate</name>
    </ligand>
</feature>
<feature type="binding site" evidence="1">
    <location>
        <begin position="76"/>
        <end position="77"/>
    </location>
    <ligand>
        <name>substrate</name>
    </ligand>
</feature>
<feature type="binding site" evidence="1">
    <location>
        <position position="159"/>
    </location>
    <ligand>
        <name>substrate</name>
    </ligand>
</feature>
<feature type="binding site" evidence="1">
    <location>
        <position position="192"/>
    </location>
    <ligand>
        <name>substrate</name>
    </ligand>
</feature>
<feature type="binding site" evidence="1">
    <location>
        <begin position="210"/>
        <end position="211"/>
    </location>
    <ligand>
        <name>substrate</name>
    </ligand>
</feature>
<feature type="binding site" evidence="1">
    <location>
        <begin position="220"/>
        <end position="221"/>
    </location>
    <ligand>
        <name>substrate</name>
    </ligand>
</feature>
<feature type="site" description="Could be important to modulate the pK values of the two catalytic cysteine residues" evidence="1">
    <location>
        <position position="161"/>
    </location>
</feature>
<feature type="site" description="Could be important to modulate the pK values of the two catalytic cysteine residues" evidence="1">
    <location>
        <position position="210"/>
    </location>
</feature>
<feature type="site" description="Important for dimerization" evidence="1">
    <location>
        <position position="270"/>
    </location>
</feature>
<dbReference type="EC" id="5.1.1.7" evidence="1"/>
<dbReference type="EMBL" id="CP000627">
    <property type="protein sequence ID" value="ABQ19755.1"/>
    <property type="molecule type" value="Genomic_DNA"/>
</dbReference>
<dbReference type="EMBL" id="CP001235">
    <property type="protein sequence ID" value="ACP08082.1"/>
    <property type="status" value="ALT_INIT"/>
    <property type="molecule type" value="Genomic_DNA"/>
</dbReference>
<dbReference type="RefSeq" id="WP_000545404.1">
    <property type="nucleotide sequence ID" value="NZ_JAACZH010000014.1"/>
</dbReference>
<dbReference type="SMR" id="A5F4I6"/>
<dbReference type="GeneID" id="69718613"/>
<dbReference type="KEGG" id="vco:VC0395_A2393"/>
<dbReference type="KEGG" id="vcr:VC395_0054"/>
<dbReference type="PATRIC" id="fig|345073.21.peg.52"/>
<dbReference type="eggNOG" id="COG0253">
    <property type="taxonomic scope" value="Bacteria"/>
</dbReference>
<dbReference type="HOGENOM" id="CLU_053306_1_1_6"/>
<dbReference type="OrthoDB" id="9805408at2"/>
<dbReference type="UniPathway" id="UPA00034">
    <property type="reaction ID" value="UER00025"/>
</dbReference>
<dbReference type="Proteomes" id="UP000000249">
    <property type="component" value="Chromosome 2"/>
</dbReference>
<dbReference type="GO" id="GO:0005829">
    <property type="term" value="C:cytosol"/>
    <property type="evidence" value="ECO:0007669"/>
    <property type="project" value="TreeGrafter"/>
</dbReference>
<dbReference type="GO" id="GO:0008837">
    <property type="term" value="F:diaminopimelate epimerase activity"/>
    <property type="evidence" value="ECO:0007669"/>
    <property type="project" value="UniProtKB-UniRule"/>
</dbReference>
<dbReference type="GO" id="GO:0009089">
    <property type="term" value="P:lysine biosynthetic process via diaminopimelate"/>
    <property type="evidence" value="ECO:0007669"/>
    <property type="project" value="UniProtKB-UniRule"/>
</dbReference>
<dbReference type="FunFam" id="3.10.310.10:FF:000001">
    <property type="entry name" value="Diaminopimelate epimerase"/>
    <property type="match status" value="1"/>
</dbReference>
<dbReference type="FunFam" id="3.10.310.10:FF:000002">
    <property type="entry name" value="Diaminopimelate epimerase"/>
    <property type="match status" value="1"/>
</dbReference>
<dbReference type="Gene3D" id="3.10.310.10">
    <property type="entry name" value="Diaminopimelate Epimerase, Chain A, domain 1"/>
    <property type="match status" value="2"/>
</dbReference>
<dbReference type="HAMAP" id="MF_00197">
    <property type="entry name" value="DAP_epimerase"/>
    <property type="match status" value="1"/>
</dbReference>
<dbReference type="InterPro" id="IPR018510">
    <property type="entry name" value="DAP_epimerase_AS"/>
</dbReference>
<dbReference type="InterPro" id="IPR001653">
    <property type="entry name" value="DAP_epimerase_DapF"/>
</dbReference>
<dbReference type="NCBIfam" id="TIGR00652">
    <property type="entry name" value="DapF"/>
    <property type="match status" value="1"/>
</dbReference>
<dbReference type="PANTHER" id="PTHR31689:SF0">
    <property type="entry name" value="DIAMINOPIMELATE EPIMERASE"/>
    <property type="match status" value="1"/>
</dbReference>
<dbReference type="PANTHER" id="PTHR31689">
    <property type="entry name" value="DIAMINOPIMELATE EPIMERASE, CHLOROPLASTIC"/>
    <property type="match status" value="1"/>
</dbReference>
<dbReference type="Pfam" id="PF01678">
    <property type="entry name" value="DAP_epimerase"/>
    <property type="match status" value="2"/>
</dbReference>
<dbReference type="SUPFAM" id="SSF54506">
    <property type="entry name" value="Diaminopimelate epimerase-like"/>
    <property type="match status" value="1"/>
</dbReference>
<dbReference type="PROSITE" id="PS01326">
    <property type="entry name" value="DAP_EPIMERASE"/>
    <property type="match status" value="1"/>
</dbReference>